<protein>
    <recommendedName>
        <fullName evidence="1">Cholesterol ring-cleaving hydrolase IpdA subunit</fullName>
        <ecNumber evidence="1">4.1.99.-</ecNumber>
    </recommendedName>
    <alternativeName>
        <fullName evidence="1">(3E)-2-(2-carboxylatoethyl)-3-methyl-6-oxocyclohex-1-ene-1-carboxyl-CoA hydrolase alpha subunit</fullName>
        <shortName evidence="1">COCHEA-CoA hydrolase alpha subunit</shortName>
    </alternativeName>
</protein>
<organism>
    <name type="scientific">Mycobacterium tuberculosis (strain CDC 1551 / Oshkosh)</name>
    <dbReference type="NCBI Taxonomy" id="83331"/>
    <lineage>
        <taxon>Bacteria</taxon>
        <taxon>Bacillati</taxon>
        <taxon>Actinomycetota</taxon>
        <taxon>Actinomycetes</taxon>
        <taxon>Mycobacteriales</taxon>
        <taxon>Mycobacteriaceae</taxon>
        <taxon>Mycobacterium</taxon>
        <taxon>Mycobacterium tuberculosis complex</taxon>
    </lineage>
</organism>
<name>IPDA_MYCTO</name>
<sequence length="292" mass="31723">MPDKRTALDDAVAQLRSGMTIGIAGWGSRRKPMAFVRAILRSDVTDLTVVTYGGPDLGLLCSAGKVKRVYYGFVSLDSPPFYDPWFAHARTSGAIEAREMDEGMLRCGLQAAAQRLPFLPIRAGLGSSVPQFWAGELQTVTSPYPAPGGGYETLIAMPALRLDAAFAHLNLGDSHGNAAYTGIDPYFDDLFLMAAERRFLSVERIVATEELVKSVPPQALLVNRMMVDAIVEAPGGAHFTTAAPDYGRDEQFQRHYAEAASTQVGWQQFVHTYLSGTEADYQAAVHNFGASR</sequence>
<accession>P9WPW0</accession>
<accession>L0TCX1</accession>
<accession>P71850</accession>
<dbReference type="EC" id="4.1.99.-" evidence="1"/>
<dbReference type="EMBL" id="AE000516">
    <property type="protein sequence ID" value="AAK48015.1"/>
    <property type="molecule type" value="Genomic_DNA"/>
</dbReference>
<dbReference type="PIR" id="H70677">
    <property type="entry name" value="H70677"/>
</dbReference>
<dbReference type="RefSeq" id="WP_003900094.1">
    <property type="nucleotide sequence ID" value="NZ_KK341227.1"/>
</dbReference>
<dbReference type="SMR" id="P9WPW0"/>
<dbReference type="KEGG" id="mtc:MT3655"/>
<dbReference type="PATRIC" id="fig|83331.31.peg.3936"/>
<dbReference type="HOGENOM" id="CLU_049557_1_0_11"/>
<dbReference type="UniPathway" id="UPA01058"/>
<dbReference type="Proteomes" id="UP000001020">
    <property type="component" value="Chromosome"/>
</dbReference>
<dbReference type="GO" id="GO:0008410">
    <property type="term" value="F:CoA-transferase activity"/>
    <property type="evidence" value="ECO:0007669"/>
    <property type="project" value="InterPro"/>
</dbReference>
<dbReference type="GO" id="GO:0016829">
    <property type="term" value="F:lyase activity"/>
    <property type="evidence" value="ECO:0007669"/>
    <property type="project" value="UniProtKB-KW"/>
</dbReference>
<dbReference type="GO" id="GO:0006707">
    <property type="term" value="P:cholesterol catabolic process"/>
    <property type="evidence" value="ECO:0007669"/>
    <property type="project" value="UniProtKB-UniPathway"/>
</dbReference>
<dbReference type="Gene3D" id="3.30.30.40">
    <property type="match status" value="1"/>
</dbReference>
<dbReference type="Gene3D" id="3.40.1080.10">
    <property type="entry name" value="Glutaconate Coenzyme A-transferase"/>
    <property type="match status" value="1"/>
</dbReference>
<dbReference type="InterPro" id="IPR004165">
    <property type="entry name" value="CoA_trans_fam_I"/>
</dbReference>
<dbReference type="InterPro" id="IPR037171">
    <property type="entry name" value="NagB/RpiA_transferase-like"/>
</dbReference>
<dbReference type="Pfam" id="PF01144">
    <property type="entry name" value="CoA_trans"/>
    <property type="match status" value="1"/>
</dbReference>
<dbReference type="SMART" id="SM00882">
    <property type="entry name" value="CoA_trans"/>
    <property type="match status" value="1"/>
</dbReference>
<dbReference type="SUPFAM" id="SSF100950">
    <property type="entry name" value="NagB/RpiA/CoA transferase-like"/>
    <property type="match status" value="1"/>
</dbReference>
<keyword id="KW-0153">Cholesterol metabolism</keyword>
<keyword id="KW-0443">Lipid metabolism</keyword>
<keyword id="KW-0456">Lyase</keyword>
<keyword id="KW-1185">Reference proteome</keyword>
<keyword id="KW-0753">Steroid metabolism</keyword>
<keyword id="KW-1207">Sterol metabolism</keyword>
<reference key="1">
    <citation type="journal article" date="2002" name="J. Bacteriol.">
        <title>Whole-genome comparison of Mycobacterium tuberculosis clinical and laboratory strains.</title>
        <authorList>
            <person name="Fleischmann R.D."/>
            <person name="Alland D."/>
            <person name="Eisen J.A."/>
            <person name="Carpenter L."/>
            <person name="White O."/>
            <person name="Peterson J.D."/>
            <person name="DeBoy R.T."/>
            <person name="Dodson R.J."/>
            <person name="Gwinn M.L."/>
            <person name="Haft D.H."/>
            <person name="Hickey E.K."/>
            <person name="Kolonay J.F."/>
            <person name="Nelson W.C."/>
            <person name="Umayam L.A."/>
            <person name="Ermolaeva M.D."/>
            <person name="Salzberg S.L."/>
            <person name="Delcher A."/>
            <person name="Utterback T.R."/>
            <person name="Weidman J.F."/>
            <person name="Khouri H.M."/>
            <person name="Gill J."/>
            <person name="Mikula A."/>
            <person name="Bishai W."/>
            <person name="Jacobs W.R. Jr."/>
            <person name="Venter J.C."/>
            <person name="Fraser C.M."/>
        </authorList>
    </citation>
    <scope>NUCLEOTIDE SEQUENCE [LARGE SCALE GENOMIC DNA]</scope>
    <source>
        <strain>CDC 1551 / Oshkosh</strain>
    </source>
</reference>
<gene>
    <name evidence="1" type="primary">ipdA</name>
    <name type="ordered locus">MT3655</name>
</gene>
<comment type="function">
    <text evidence="1">Involved in the final steps of cholesterol and steroid degradation. Opens the last steroid ring of cholesterol by catalyzing the hydrolysis of (3E)-2-(2-carboxylatoethyl)-3-methyl-6-oxocyclohex-1-ene-1-carboxyl-CoA (COCHEA-CoA) to 6-methyl-3,7-dioxodecanedioyl-CoA (MeDODA-CoA).</text>
</comment>
<comment type="catalytic activity">
    <reaction evidence="1">
        <text>(3E)-2-(2-carboxylatoethyl)-3-methyl-6-oxocyclohex-1-ene-1-carboxyl-CoA + H2O = 6-methyl-3,7-dioxodecanedioyl-CoA</text>
        <dbReference type="Rhea" id="RHEA:66364"/>
        <dbReference type="ChEBI" id="CHEBI:15377"/>
        <dbReference type="ChEBI" id="CHEBI:167101"/>
        <dbReference type="ChEBI" id="CHEBI:167102"/>
    </reaction>
    <physiologicalReaction direction="left-to-right" evidence="1">
        <dbReference type="Rhea" id="RHEA:66365"/>
    </physiologicalReaction>
</comment>
<comment type="pathway">
    <text evidence="1">Steroid metabolism; cholesterol degradation.</text>
</comment>
<comment type="subunit">
    <text evidence="1">Heterotetramer composed of 2 IpdA subunits and 2 IpdB subunits.</text>
</comment>
<comment type="similarity">
    <text evidence="2">Belongs to the 3-oxoacid CoA-transferase subunit A family.</text>
</comment>
<feature type="chain" id="PRO_0000426883" description="Cholesterol ring-cleaving hydrolase IpdA subunit">
    <location>
        <begin position="1"/>
        <end position="292"/>
    </location>
</feature>
<proteinExistence type="inferred from homology"/>
<evidence type="ECO:0000250" key="1">
    <source>
        <dbReference type="UniProtKB" id="P9WPW1"/>
    </source>
</evidence>
<evidence type="ECO:0000305" key="2"/>